<sequence>MLGKEWENTSFAEIGLLHQAPNDNDLEKFQHALTLMSEADNSSDLLIPLISDFLIWFYYQKTPLKWIPFLGHFFNTWQSCSFPPRRYLLAKILSGRISELLKVSPFELAASVTSQDVVEADSLVEENELQAWLEKQELVPSSSNFLNSFWISGGERELTEEEQNSLLQSNTTYTNSDLPASKQLESFISMNLSYSKVFFLHLLQHSDSSFNDKFLLLLANIPVTVSNVEVLLYLLQQEESLAQFDLNGKSFLYHMLVSLHNQVTNTSHLEKQRISTVATLFISKLFEIPSLSEYLSSTLFLDLQAFCIVALPQSAKLFQKVKALKNNP</sequence>
<dbReference type="EMBL" id="CU329670">
    <property type="protein sequence ID" value="CAB11670.1"/>
    <property type="molecule type" value="Genomic_DNA"/>
</dbReference>
<dbReference type="PIR" id="T38312">
    <property type="entry name" value="T38312"/>
</dbReference>
<dbReference type="BioGRID" id="278386">
    <property type="interactions" value="22"/>
</dbReference>
<dbReference type="STRING" id="284812.O13957"/>
<dbReference type="PaxDb" id="4896-SPAC23H4.16c.1"/>
<dbReference type="EnsemblFungi" id="SPAC23H4.16c.1">
    <property type="protein sequence ID" value="SPAC23H4.16c.1:pep"/>
    <property type="gene ID" value="SPAC23H4.16c"/>
</dbReference>
<dbReference type="KEGG" id="spo:2541896"/>
<dbReference type="PomBase" id="SPAC23H4.16c"/>
<dbReference type="VEuPathDB" id="FungiDB:SPAC23H4.16c"/>
<dbReference type="HOGENOM" id="CLU_826815_0_0_1"/>
<dbReference type="InParanoid" id="O13957"/>
<dbReference type="OMA" id="DLQSFCM"/>
<dbReference type="PRO" id="PR:O13957"/>
<dbReference type="Proteomes" id="UP000002485">
    <property type="component" value="Chromosome I"/>
</dbReference>
<dbReference type="GO" id="GO:0030015">
    <property type="term" value="C:CCR4-NOT core complex"/>
    <property type="evidence" value="ECO:0000250"/>
    <property type="project" value="PomBase"/>
</dbReference>
<dbReference type="GO" id="GO:0005829">
    <property type="term" value="C:cytosol"/>
    <property type="evidence" value="ECO:0007005"/>
    <property type="project" value="PomBase"/>
</dbReference>
<dbReference type="GO" id="GO:0005634">
    <property type="term" value="C:nucleus"/>
    <property type="evidence" value="ECO:0007005"/>
    <property type="project" value="PomBase"/>
</dbReference>
<dbReference type="GO" id="GO:0000289">
    <property type="term" value="P:nuclear-transcribed mRNA poly(A) tail shortening"/>
    <property type="evidence" value="ECO:0000305"/>
    <property type="project" value="PomBase"/>
</dbReference>
<protein>
    <recommendedName>
        <fullName>Uncharacterized protein C23H4.16c</fullName>
    </recommendedName>
</protein>
<proteinExistence type="predicted"/>
<gene>
    <name type="ORF">SPAC23H4.16c</name>
</gene>
<keyword id="KW-1185">Reference proteome</keyword>
<reference key="1">
    <citation type="journal article" date="2002" name="Nature">
        <title>The genome sequence of Schizosaccharomyces pombe.</title>
        <authorList>
            <person name="Wood V."/>
            <person name="Gwilliam R."/>
            <person name="Rajandream M.A."/>
            <person name="Lyne M.H."/>
            <person name="Lyne R."/>
            <person name="Stewart A."/>
            <person name="Sgouros J.G."/>
            <person name="Peat N."/>
            <person name="Hayles J."/>
            <person name="Baker S.G."/>
            <person name="Basham D."/>
            <person name="Bowman S."/>
            <person name="Brooks K."/>
            <person name="Brown D."/>
            <person name="Brown S."/>
            <person name="Chillingworth T."/>
            <person name="Churcher C.M."/>
            <person name="Collins M."/>
            <person name="Connor R."/>
            <person name="Cronin A."/>
            <person name="Davis P."/>
            <person name="Feltwell T."/>
            <person name="Fraser A."/>
            <person name="Gentles S."/>
            <person name="Goble A."/>
            <person name="Hamlin N."/>
            <person name="Harris D.E."/>
            <person name="Hidalgo J."/>
            <person name="Hodgson G."/>
            <person name="Holroyd S."/>
            <person name="Hornsby T."/>
            <person name="Howarth S."/>
            <person name="Huckle E.J."/>
            <person name="Hunt S."/>
            <person name="Jagels K."/>
            <person name="James K.D."/>
            <person name="Jones L."/>
            <person name="Jones M."/>
            <person name="Leather S."/>
            <person name="McDonald S."/>
            <person name="McLean J."/>
            <person name="Mooney P."/>
            <person name="Moule S."/>
            <person name="Mungall K.L."/>
            <person name="Murphy L.D."/>
            <person name="Niblett D."/>
            <person name="Odell C."/>
            <person name="Oliver K."/>
            <person name="O'Neil S."/>
            <person name="Pearson D."/>
            <person name="Quail M.A."/>
            <person name="Rabbinowitsch E."/>
            <person name="Rutherford K.M."/>
            <person name="Rutter S."/>
            <person name="Saunders D."/>
            <person name="Seeger K."/>
            <person name="Sharp S."/>
            <person name="Skelton J."/>
            <person name="Simmonds M.N."/>
            <person name="Squares R."/>
            <person name="Squares S."/>
            <person name="Stevens K."/>
            <person name="Taylor K."/>
            <person name="Taylor R.G."/>
            <person name="Tivey A."/>
            <person name="Walsh S.V."/>
            <person name="Warren T."/>
            <person name="Whitehead S."/>
            <person name="Woodward J.R."/>
            <person name="Volckaert G."/>
            <person name="Aert R."/>
            <person name="Robben J."/>
            <person name="Grymonprez B."/>
            <person name="Weltjens I."/>
            <person name="Vanstreels E."/>
            <person name="Rieger M."/>
            <person name="Schaefer M."/>
            <person name="Mueller-Auer S."/>
            <person name="Gabel C."/>
            <person name="Fuchs M."/>
            <person name="Duesterhoeft A."/>
            <person name="Fritzc C."/>
            <person name="Holzer E."/>
            <person name="Moestl D."/>
            <person name="Hilbert H."/>
            <person name="Borzym K."/>
            <person name="Langer I."/>
            <person name="Beck A."/>
            <person name="Lehrach H."/>
            <person name="Reinhardt R."/>
            <person name="Pohl T.M."/>
            <person name="Eger P."/>
            <person name="Zimmermann W."/>
            <person name="Wedler H."/>
            <person name="Wambutt R."/>
            <person name="Purnelle B."/>
            <person name="Goffeau A."/>
            <person name="Cadieu E."/>
            <person name="Dreano S."/>
            <person name="Gloux S."/>
            <person name="Lelaure V."/>
            <person name="Mottier S."/>
            <person name="Galibert F."/>
            <person name="Aves S.J."/>
            <person name="Xiang Z."/>
            <person name="Hunt C."/>
            <person name="Moore K."/>
            <person name="Hurst S.M."/>
            <person name="Lucas M."/>
            <person name="Rochet M."/>
            <person name="Gaillardin C."/>
            <person name="Tallada V.A."/>
            <person name="Garzon A."/>
            <person name="Thode G."/>
            <person name="Daga R.R."/>
            <person name="Cruzado L."/>
            <person name="Jimenez J."/>
            <person name="Sanchez M."/>
            <person name="del Rey F."/>
            <person name="Benito J."/>
            <person name="Dominguez A."/>
            <person name="Revuelta J.L."/>
            <person name="Moreno S."/>
            <person name="Armstrong J."/>
            <person name="Forsburg S.L."/>
            <person name="Cerutti L."/>
            <person name="Lowe T."/>
            <person name="McCombie W.R."/>
            <person name="Paulsen I."/>
            <person name="Potashkin J."/>
            <person name="Shpakovski G.V."/>
            <person name="Ussery D."/>
            <person name="Barrell B.G."/>
            <person name="Nurse P."/>
        </authorList>
    </citation>
    <scope>NUCLEOTIDE SEQUENCE [LARGE SCALE GENOMIC DNA]</scope>
    <source>
        <strain>972 / ATCC 24843</strain>
    </source>
</reference>
<feature type="chain" id="PRO_0000116719" description="Uncharacterized protein C23H4.16c">
    <location>
        <begin position="1"/>
        <end position="328"/>
    </location>
</feature>
<name>YEHG_SCHPO</name>
<accession>O13957</accession>
<organism>
    <name type="scientific">Schizosaccharomyces pombe (strain 972 / ATCC 24843)</name>
    <name type="common">Fission yeast</name>
    <dbReference type="NCBI Taxonomy" id="284812"/>
    <lineage>
        <taxon>Eukaryota</taxon>
        <taxon>Fungi</taxon>
        <taxon>Dikarya</taxon>
        <taxon>Ascomycota</taxon>
        <taxon>Taphrinomycotina</taxon>
        <taxon>Schizosaccharomycetes</taxon>
        <taxon>Schizosaccharomycetales</taxon>
        <taxon>Schizosaccharomycetaceae</taxon>
        <taxon>Schizosaccharomyces</taxon>
    </lineage>
</organism>